<name>ISPE_CHLP8</name>
<accession>B3QPX7</accession>
<organism>
    <name type="scientific">Chlorobaculum parvum (strain DSM 263 / NCIMB 8327)</name>
    <name type="common">Chlorobium vibrioforme subsp. thiosulfatophilum</name>
    <dbReference type="NCBI Taxonomy" id="517417"/>
    <lineage>
        <taxon>Bacteria</taxon>
        <taxon>Pseudomonadati</taxon>
        <taxon>Chlorobiota</taxon>
        <taxon>Chlorobiia</taxon>
        <taxon>Chlorobiales</taxon>
        <taxon>Chlorobiaceae</taxon>
        <taxon>Chlorobaculum</taxon>
    </lineage>
</organism>
<feature type="chain" id="PRO_1000092071" description="4-diphosphocytidyl-2-C-methyl-D-erythritol kinase">
    <location>
        <begin position="1"/>
        <end position="286"/>
    </location>
</feature>
<feature type="active site" evidence="1">
    <location>
        <position position="11"/>
    </location>
</feature>
<feature type="active site" evidence="1">
    <location>
        <position position="135"/>
    </location>
</feature>
<feature type="binding site" evidence="1">
    <location>
        <begin position="93"/>
        <end position="103"/>
    </location>
    <ligand>
        <name>ATP</name>
        <dbReference type="ChEBI" id="CHEBI:30616"/>
    </ligand>
</feature>
<dbReference type="EC" id="2.7.1.148" evidence="1"/>
<dbReference type="EMBL" id="CP001099">
    <property type="protein sequence ID" value="ACF11980.1"/>
    <property type="molecule type" value="Genomic_DNA"/>
</dbReference>
<dbReference type="RefSeq" id="WP_012502813.1">
    <property type="nucleotide sequence ID" value="NC_011027.1"/>
</dbReference>
<dbReference type="SMR" id="B3QPX7"/>
<dbReference type="STRING" id="517417.Cpar_1582"/>
<dbReference type="KEGG" id="cpc:Cpar_1582"/>
<dbReference type="eggNOG" id="COG1947">
    <property type="taxonomic scope" value="Bacteria"/>
</dbReference>
<dbReference type="HOGENOM" id="CLU_053057_3_0_10"/>
<dbReference type="OrthoDB" id="9809438at2"/>
<dbReference type="UniPathway" id="UPA00056">
    <property type="reaction ID" value="UER00094"/>
</dbReference>
<dbReference type="Proteomes" id="UP000008811">
    <property type="component" value="Chromosome"/>
</dbReference>
<dbReference type="GO" id="GO:0050515">
    <property type="term" value="F:4-(cytidine 5'-diphospho)-2-C-methyl-D-erythritol kinase activity"/>
    <property type="evidence" value="ECO:0007669"/>
    <property type="project" value="UniProtKB-UniRule"/>
</dbReference>
<dbReference type="GO" id="GO:0005524">
    <property type="term" value="F:ATP binding"/>
    <property type="evidence" value="ECO:0007669"/>
    <property type="project" value="UniProtKB-UniRule"/>
</dbReference>
<dbReference type="GO" id="GO:0019288">
    <property type="term" value="P:isopentenyl diphosphate biosynthetic process, methylerythritol 4-phosphate pathway"/>
    <property type="evidence" value="ECO:0007669"/>
    <property type="project" value="UniProtKB-UniRule"/>
</dbReference>
<dbReference type="GO" id="GO:0016114">
    <property type="term" value="P:terpenoid biosynthetic process"/>
    <property type="evidence" value="ECO:0007669"/>
    <property type="project" value="InterPro"/>
</dbReference>
<dbReference type="Gene3D" id="3.30.230.10">
    <property type="match status" value="1"/>
</dbReference>
<dbReference type="Gene3D" id="3.30.70.890">
    <property type="entry name" value="GHMP kinase, C-terminal domain"/>
    <property type="match status" value="1"/>
</dbReference>
<dbReference type="HAMAP" id="MF_00061">
    <property type="entry name" value="IspE"/>
    <property type="match status" value="1"/>
</dbReference>
<dbReference type="InterPro" id="IPR013750">
    <property type="entry name" value="GHMP_kinase_C_dom"/>
</dbReference>
<dbReference type="InterPro" id="IPR036554">
    <property type="entry name" value="GHMP_kinase_C_sf"/>
</dbReference>
<dbReference type="InterPro" id="IPR006204">
    <property type="entry name" value="GHMP_kinase_N_dom"/>
</dbReference>
<dbReference type="InterPro" id="IPR004424">
    <property type="entry name" value="IspE"/>
</dbReference>
<dbReference type="InterPro" id="IPR020568">
    <property type="entry name" value="Ribosomal_Su5_D2-typ_SF"/>
</dbReference>
<dbReference type="InterPro" id="IPR014721">
    <property type="entry name" value="Ribsml_uS5_D2-typ_fold_subgr"/>
</dbReference>
<dbReference type="NCBIfam" id="TIGR00154">
    <property type="entry name" value="ispE"/>
    <property type="match status" value="1"/>
</dbReference>
<dbReference type="PANTHER" id="PTHR43527">
    <property type="entry name" value="4-DIPHOSPHOCYTIDYL-2-C-METHYL-D-ERYTHRITOL KINASE, CHLOROPLASTIC"/>
    <property type="match status" value="1"/>
</dbReference>
<dbReference type="PANTHER" id="PTHR43527:SF2">
    <property type="entry name" value="4-DIPHOSPHOCYTIDYL-2-C-METHYL-D-ERYTHRITOL KINASE, CHLOROPLASTIC"/>
    <property type="match status" value="1"/>
</dbReference>
<dbReference type="Pfam" id="PF08544">
    <property type="entry name" value="GHMP_kinases_C"/>
    <property type="match status" value="1"/>
</dbReference>
<dbReference type="Pfam" id="PF00288">
    <property type="entry name" value="GHMP_kinases_N"/>
    <property type="match status" value="1"/>
</dbReference>
<dbReference type="PIRSF" id="PIRSF010376">
    <property type="entry name" value="IspE"/>
    <property type="match status" value="1"/>
</dbReference>
<dbReference type="SUPFAM" id="SSF55060">
    <property type="entry name" value="GHMP Kinase, C-terminal domain"/>
    <property type="match status" value="1"/>
</dbReference>
<dbReference type="SUPFAM" id="SSF54211">
    <property type="entry name" value="Ribosomal protein S5 domain 2-like"/>
    <property type="match status" value="1"/>
</dbReference>
<reference key="1">
    <citation type="submission" date="2008-06" db="EMBL/GenBank/DDBJ databases">
        <title>Complete sequence of Chlorobaculum parvum NCIB 8327.</title>
        <authorList>
            <consortium name="US DOE Joint Genome Institute"/>
            <person name="Lucas S."/>
            <person name="Copeland A."/>
            <person name="Lapidus A."/>
            <person name="Glavina del Rio T."/>
            <person name="Dalin E."/>
            <person name="Tice H."/>
            <person name="Bruce D."/>
            <person name="Goodwin L."/>
            <person name="Pitluck S."/>
            <person name="Schmutz J."/>
            <person name="Larimer F."/>
            <person name="Land M."/>
            <person name="Hauser L."/>
            <person name="Kyrpides N."/>
            <person name="Mikhailova N."/>
            <person name="Zhao F."/>
            <person name="Li T."/>
            <person name="Liu Z."/>
            <person name="Overmann J."/>
            <person name="Bryant D.A."/>
            <person name="Richardson P."/>
        </authorList>
    </citation>
    <scope>NUCLEOTIDE SEQUENCE [LARGE SCALE GENOMIC DNA]</scope>
    <source>
        <strain>DSM 263 / NCIMB 8327</strain>
    </source>
</reference>
<gene>
    <name evidence="1" type="primary">ispE</name>
    <name type="ordered locus">Cpar_1582</name>
</gene>
<evidence type="ECO:0000255" key="1">
    <source>
        <dbReference type="HAMAP-Rule" id="MF_00061"/>
    </source>
</evidence>
<proteinExistence type="inferred from homology"/>
<sequence length="286" mass="31408">MKHFSVKACAKINLGLLITSRRDDGYHTLETIFAPIEWHDTLEFTESDKIGMECTNLDLPVDDTNLCIRAAKALQDYAGISKGVSMKLVKRVPFGAGLGGGSSDAAATLNALCRLWEIDVPSAVLHRLAVKLGADVPYFLEMKGLAYASGIGEELEDLSLALPWHVVTVFPEVQVPTAWAYKNFHRQFERPVPDLKALVRRLCDDRDLSVLDAFENDFGSVVFENYPVVSQVRDTLEASGAQFVSLSGSGSAVYALFENRALADETAEEMAGKFRVNVTPAGFRME</sequence>
<keyword id="KW-0067">ATP-binding</keyword>
<keyword id="KW-0414">Isoprene biosynthesis</keyword>
<keyword id="KW-0418">Kinase</keyword>
<keyword id="KW-0547">Nucleotide-binding</keyword>
<keyword id="KW-0808">Transferase</keyword>
<comment type="function">
    <text evidence="1">Catalyzes the phosphorylation of the position 2 hydroxy group of 4-diphosphocytidyl-2C-methyl-D-erythritol.</text>
</comment>
<comment type="catalytic activity">
    <reaction evidence="1">
        <text>4-CDP-2-C-methyl-D-erythritol + ATP = 4-CDP-2-C-methyl-D-erythritol 2-phosphate + ADP + H(+)</text>
        <dbReference type="Rhea" id="RHEA:18437"/>
        <dbReference type="ChEBI" id="CHEBI:15378"/>
        <dbReference type="ChEBI" id="CHEBI:30616"/>
        <dbReference type="ChEBI" id="CHEBI:57823"/>
        <dbReference type="ChEBI" id="CHEBI:57919"/>
        <dbReference type="ChEBI" id="CHEBI:456216"/>
        <dbReference type="EC" id="2.7.1.148"/>
    </reaction>
</comment>
<comment type="pathway">
    <text evidence="1">Isoprenoid biosynthesis; isopentenyl diphosphate biosynthesis via DXP pathway; isopentenyl diphosphate from 1-deoxy-D-xylulose 5-phosphate: step 3/6.</text>
</comment>
<comment type="similarity">
    <text evidence="1">Belongs to the GHMP kinase family. IspE subfamily.</text>
</comment>
<protein>
    <recommendedName>
        <fullName evidence="1">4-diphosphocytidyl-2-C-methyl-D-erythritol kinase</fullName>
        <shortName evidence="1">CMK</shortName>
        <ecNumber evidence="1">2.7.1.148</ecNumber>
    </recommendedName>
    <alternativeName>
        <fullName evidence="1">4-(cytidine-5'-diphospho)-2-C-methyl-D-erythritol kinase</fullName>
    </alternativeName>
</protein>